<feature type="chain" id="PRO_0000114920" description="Homocysteine-responsive endoplasmic reticulum-resident ubiquitin-like domain member 1 protein">
    <location>
        <begin position="1"/>
        <end position="391"/>
    </location>
</feature>
<feature type="topological domain" description="Cytoplasmic" evidence="1">
    <location>
        <begin position="1"/>
        <end position="263"/>
    </location>
</feature>
<feature type="transmembrane region" description="Helical" evidence="1">
    <location>
        <begin position="264"/>
        <end position="284"/>
    </location>
</feature>
<feature type="topological domain" description="Lumenal" evidence="1">
    <location>
        <begin position="285"/>
        <end position="289"/>
    </location>
</feature>
<feature type="transmembrane region" description="Helical" evidence="1">
    <location>
        <begin position="290"/>
        <end position="310"/>
    </location>
</feature>
<feature type="topological domain" description="Cytoplasmic" evidence="1">
    <location>
        <begin position="311"/>
        <end position="391"/>
    </location>
</feature>
<feature type="domain" description="Ubiquitin-like" evidence="2">
    <location>
        <begin position="10"/>
        <end position="72"/>
    </location>
</feature>
<feature type="region of interest" description="Disordered" evidence="3">
    <location>
        <begin position="100"/>
        <end position="126"/>
    </location>
</feature>
<feature type="region of interest" description="Interaction with UBQLN1" evidence="8">
    <location>
        <begin position="115"/>
        <end position="200"/>
    </location>
</feature>
<feature type="region of interest" description="Interaction with SYVN1" evidence="10">
    <location>
        <begin position="170"/>
        <end position="190"/>
    </location>
</feature>
<feature type="region of interest" description="Disordered" evidence="3">
    <location>
        <begin position="318"/>
        <end position="359"/>
    </location>
</feature>
<feature type="compositionally biased region" description="Polar residues" evidence="3">
    <location>
        <begin position="112"/>
        <end position="124"/>
    </location>
</feature>
<feature type="compositionally biased region" description="Basic and acidic residues" evidence="3">
    <location>
        <begin position="346"/>
        <end position="357"/>
    </location>
</feature>
<feature type="modified residue" description="N-acetylmethionine" evidence="14">
    <location>
        <position position="1"/>
    </location>
</feature>
<feature type="modified residue" description="Phosphoserine" evidence="15">
    <location>
        <position position="135"/>
    </location>
</feature>
<feature type="splice variant" id="VSP_047333" description="In isoform 4." evidence="13">
    <location>
        <begin position="75"/>
        <end position="99"/>
    </location>
</feature>
<feature type="splice variant" id="VSP_006708" description="In isoform 2 and isoform 3." evidence="11 12">
    <location>
        <position position="76"/>
    </location>
</feature>
<feature type="splice variant" id="VSP_006709" description="In isoform 3." evidence="11">
    <location>
        <begin position="145"/>
        <end position="302"/>
    </location>
</feature>
<feature type="sequence variant" id="VAR_024277" description="In dbSNP:rs2217332.">
    <original>R</original>
    <variation>H</variation>
    <location>
        <position position="50"/>
    </location>
</feature>
<feature type="strand" evidence="16">
    <location>
        <begin position="11"/>
        <end position="15"/>
    </location>
</feature>
<feature type="strand" evidence="16">
    <location>
        <begin position="17"/>
        <end position="20"/>
    </location>
</feature>
<feature type="strand" evidence="16">
    <location>
        <begin position="24"/>
        <end position="27"/>
    </location>
</feature>
<feature type="helix" evidence="16">
    <location>
        <begin position="34"/>
        <end position="44"/>
    </location>
</feature>
<feature type="turn" evidence="16">
    <location>
        <begin position="51"/>
        <end position="53"/>
    </location>
</feature>
<feature type="strand" evidence="16">
    <location>
        <begin position="55"/>
        <end position="58"/>
    </location>
</feature>
<feature type="strand" evidence="16">
    <location>
        <begin position="65"/>
        <end position="67"/>
    </location>
</feature>
<feature type="helix" evidence="16">
    <location>
        <begin position="69"/>
        <end position="72"/>
    </location>
</feature>
<feature type="strand" evidence="16">
    <location>
        <begin position="75"/>
        <end position="77"/>
    </location>
</feature>
<feature type="strand" evidence="16">
    <location>
        <begin position="79"/>
        <end position="85"/>
    </location>
</feature>
<sequence>MESETEPEPVTLLVKSPNQRHRDLELSGDRGWSVGHLKAHLSRVYPERPRPEDQRLIYSGKLLLDHQCLRDLLPKQEKRHVLHLVCNVKSPSKMPEINAKVAESTEEPAGSNRGQYPEDSSSDGLRQREVLRNLSSPGWENISRPEAAQQAFQGLGPGFSGYTPYGWLQLSWFQQIYARQYYMQYLAATAASGAFVPPPSAQEIPVVSAPAPAPIHNQFPAENQPANQNAAPQVVVNPGANQNLRMNAQGGPIVEEDDEINRDWLDWTYSAATFSVFLSILYFYSSLSRFLMVMGATVVMYLHHVGWFPFRPRPVQNFPNDGPPPDVVNQDPNNNLQEGTDPETEDPNHLPPDRDVLDGEQTSPSFMSTAWLVFKTFFASLLPEGPPAIAN</sequence>
<keyword id="KW-0002">3D-structure</keyword>
<keyword id="KW-0007">Acetylation</keyword>
<keyword id="KW-0025">Alternative splicing</keyword>
<keyword id="KW-0256">Endoplasmic reticulum</keyword>
<keyword id="KW-0472">Membrane</keyword>
<keyword id="KW-0597">Phosphoprotein</keyword>
<keyword id="KW-1267">Proteomics identification</keyword>
<keyword id="KW-1185">Reference proteome</keyword>
<keyword id="KW-0812">Transmembrane</keyword>
<keyword id="KW-1133">Transmembrane helix</keyword>
<keyword id="KW-0834">Unfolded protein response</keyword>
<proteinExistence type="evidence at protein level"/>
<accession>Q15011</accession>
<accession>E9PGD1</accession>
<accession>O60644</accession>
<accession>Q6IAN8</accession>
<accession>Q96D92</accession>
<name>HERP1_HUMAN</name>
<dbReference type="EMBL" id="AB034989">
    <property type="protein sequence ID" value="BAB07891.1"/>
    <property type="molecule type" value="mRNA"/>
</dbReference>
<dbReference type="EMBL" id="D14695">
    <property type="protein sequence ID" value="BAA03521.1"/>
    <property type="molecule type" value="mRNA"/>
</dbReference>
<dbReference type="EMBL" id="AF055001">
    <property type="protein sequence ID" value="AAC09355.1"/>
    <property type="molecule type" value="mRNA"/>
</dbReference>
<dbReference type="EMBL" id="AF055003">
    <property type="protein sequence ID" value="AAC09357.1"/>
    <property type="molecule type" value="mRNA"/>
</dbReference>
<dbReference type="EMBL" id="AB034990">
    <property type="protein sequence ID" value="BAB19010.1"/>
    <property type="molecule type" value="Genomic_DNA"/>
</dbReference>
<dbReference type="EMBL" id="CR457116">
    <property type="protein sequence ID" value="CAG33397.1"/>
    <property type="molecule type" value="mRNA"/>
</dbReference>
<dbReference type="EMBL" id="AC012181">
    <property type="status" value="NOT_ANNOTATED_CDS"/>
    <property type="molecule type" value="Genomic_DNA"/>
</dbReference>
<dbReference type="EMBL" id="BC000086">
    <property type="protein sequence ID" value="AAH00086.1"/>
    <property type="molecule type" value="mRNA"/>
</dbReference>
<dbReference type="EMBL" id="BC008320">
    <property type="protein sequence ID" value="AAH08320.1"/>
    <property type="molecule type" value="mRNA"/>
</dbReference>
<dbReference type="EMBL" id="BC009739">
    <property type="protein sequence ID" value="AAH09739.1"/>
    <property type="molecule type" value="mRNA"/>
</dbReference>
<dbReference type="EMBL" id="BC032673">
    <property type="protein sequence ID" value="AAH32673.1"/>
    <property type="molecule type" value="mRNA"/>
</dbReference>
<dbReference type="CCDS" id="CCDS10771.1">
    <molecule id="Q15011-1"/>
</dbReference>
<dbReference type="CCDS" id="CCDS45492.1">
    <molecule id="Q15011-2"/>
</dbReference>
<dbReference type="RefSeq" id="NP_001010989.1">
    <molecule id="Q15011-2"/>
    <property type="nucleotide sequence ID" value="NM_001010989.3"/>
</dbReference>
<dbReference type="RefSeq" id="NP_001259032.1">
    <property type="nucleotide sequence ID" value="NM_001272103.1"/>
</dbReference>
<dbReference type="RefSeq" id="NP_055500.1">
    <molecule id="Q15011-1"/>
    <property type="nucleotide sequence ID" value="NM_014685.4"/>
</dbReference>
<dbReference type="PDB" id="1WGD">
    <property type="method" value="NMR"/>
    <property type="chains" value="A=10-90"/>
</dbReference>
<dbReference type="PDBsum" id="1WGD"/>
<dbReference type="SMR" id="Q15011"/>
<dbReference type="BioGRID" id="115060">
    <property type="interactions" value="171"/>
</dbReference>
<dbReference type="DIP" id="DIP-46662N"/>
<dbReference type="FunCoup" id="Q15011">
    <property type="interactions" value="1105"/>
</dbReference>
<dbReference type="IntAct" id="Q15011">
    <property type="interactions" value="25"/>
</dbReference>
<dbReference type="MINT" id="Q15011"/>
<dbReference type="STRING" id="9606.ENSP00000409555"/>
<dbReference type="iPTMnet" id="Q15011"/>
<dbReference type="PhosphoSitePlus" id="Q15011"/>
<dbReference type="SwissPalm" id="Q15011"/>
<dbReference type="BioMuta" id="HERPUD1"/>
<dbReference type="DMDM" id="3123034"/>
<dbReference type="jPOST" id="Q15011"/>
<dbReference type="MassIVE" id="Q15011"/>
<dbReference type="PaxDb" id="9606-ENSP00000409555"/>
<dbReference type="PeptideAtlas" id="Q15011"/>
<dbReference type="ProteomicsDB" id="20293"/>
<dbReference type="ProteomicsDB" id="60361">
    <molecule id="Q15011-1"/>
</dbReference>
<dbReference type="ProteomicsDB" id="60362">
    <molecule id="Q15011-2"/>
</dbReference>
<dbReference type="ProteomicsDB" id="60363">
    <molecule id="Q15011-3"/>
</dbReference>
<dbReference type="Pumba" id="Q15011"/>
<dbReference type="Antibodypedia" id="28691">
    <property type="antibodies" value="290 antibodies from 33 providers"/>
</dbReference>
<dbReference type="DNASU" id="9709"/>
<dbReference type="Ensembl" id="ENST00000300302.9">
    <molecule id="Q15011-2"/>
    <property type="protein sequence ID" value="ENSP00000300302.5"/>
    <property type="gene ID" value="ENSG00000051108.15"/>
</dbReference>
<dbReference type="Ensembl" id="ENST00000344114.8">
    <molecule id="Q15011-3"/>
    <property type="protein sequence ID" value="ENSP00000340931.4"/>
    <property type="gene ID" value="ENSG00000051108.15"/>
</dbReference>
<dbReference type="Ensembl" id="ENST00000379792.6">
    <molecule id="Q15011-4"/>
    <property type="protein sequence ID" value="ENSP00000369118.2"/>
    <property type="gene ID" value="ENSG00000051108.15"/>
</dbReference>
<dbReference type="Ensembl" id="ENST00000439977.7">
    <molecule id="Q15011-1"/>
    <property type="protein sequence ID" value="ENSP00000409555.2"/>
    <property type="gene ID" value="ENSG00000051108.15"/>
</dbReference>
<dbReference type="GeneID" id="9709"/>
<dbReference type="KEGG" id="hsa:9709"/>
<dbReference type="MANE-Select" id="ENST00000439977.7">
    <property type="protein sequence ID" value="ENSP00000409555.2"/>
    <property type="RefSeq nucleotide sequence ID" value="NM_014685.4"/>
    <property type="RefSeq protein sequence ID" value="NP_055500.1"/>
</dbReference>
<dbReference type="UCSC" id="uc002eke.3">
    <molecule id="Q15011-1"/>
    <property type="organism name" value="human"/>
</dbReference>
<dbReference type="AGR" id="HGNC:13744"/>
<dbReference type="CTD" id="9709"/>
<dbReference type="DisGeNET" id="9709"/>
<dbReference type="GeneCards" id="HERPUD1"/>
<dbReference type="HGNC" id="HGNC:13744">
    <property type="gene designation" value="HERPUD1"/>
</dbReference>
<dbReference type="HPA" id="ENSG00000051108">
    <property type="expression patterns" value="Low tissue specificity"/>
</dbReference>
<dbReference type="MalaCards" id="HERPUD1"/>
<dbReference type="MIM" id="608070">
    <property type="type" value="gene"/>
</dbReference>
<dbReference type="neXtProt" id="NX_Q15011"/>
<dbReference type="OpenTargets" id="ENSG00000051108"/>
<dbReference type="PharmGKB" id="PA29252"/>
<dbReference type="VEuPathDB" id="HostDB:ENSG00000051108"/>
<dbReference type="eggNOG" id="KOG4583">
    <property type="taxonomic scope" value="Eukaryota"/>
</dbReference>
<dbReference type="GeneTree" id="ENSGT00390000017671"/>
<dbReference type="HOGENOM" id="CLU_1194535_0_0_1"/>
<dbReference type="InParanoid" id="Q15011"/>
<dbReference type="OMA" id="MSTAWVF"/>
<dbReference type="OrthoDB" id="21589at2759"/>
<dbReference type="PAN-GO" id="Q15011">
    <property type="GO annotations" value="7 GO annotations based on evolutionary models"/>
</dbReference>
<dbReference type="PhylomeDB" id="Q15011"/>
<dbReference type="TreeFam" id="TF324319"/>
<dbReference type="PathwayCommons" id="Q15011"/>
<dbReference type="Reactome" id="R-HSA-380994">
    <property type="pathway name" value="ATF4 activates genes in response to endoplasmic reticulum stress"/>
</dbReference>
<dbReference type="SignaLink" id="Q15011"/>
<dbReference type="SIGNOR" id="Q15011"/>
<dbReference type="BioGRID-ORCS" id="9709">
    <property type="hits" value="17 hits in 1154 CRISPR screens"/>
</dbReference>
<dbReference type="ChiTaRS" id="HERPUD1">
    <property type="organism name" value="human"/>
</dbReference>
<dbReference type="EvolutionaryTrace" id="Q15011"/>
<dbReference type="GeneWiki" id="HERPUD1"/>
<dbReference type="GenomeRNAi" id="9709"/>
<dbReference type="Pharos" id="Q15011">
    <property type="development level" value="Tbio"/>
</dbReference>
<dbReference type="PRO" id="PR:Q15011"/>
<dbReference type="Proteomes" id="UP000005640">
    <property type="component" value="Chromosome 16"/>
</dbReference>
<dbReference type="RNAct" id="Q15011">
    <property type="molecule type" value="protein"/>
</dbReference>
<dbReference type="Bgee" id="ENSG00000051108">
    <property type="expression patterns" value="Expressed in body of pancreas and 205 other cell types or tissues"/>
</dbReference>
<dbReference type="ExpressionAtlas" id="Q15011">
    <property type="expression patterns" value="baseline and differential"/>
</dbReference>
<dbReference type="GO" id="GO:0005783">
    <property type="term" value="C:endoplasmic reticulum"/>
    <property type="evidence" value="ECO:0000314"/>
    <property type="project" value="ParkinsonsUK-UCL"/>
</dbReference>
<dbReference type="GO" id="GO:0005789">
    <property type="term" value="C:endoplasmic reticulum membrane"/>
    <property type="evidence" value="ECO:0000314"/>
    <property type="project" value="UniProtKB"/>
</dbReference>
<dbReference type="GO" id="GO:0044322">
    <property type="term" value="C:endoplasmic reticulum quality control compartment"/>
    <property type="evidence" value="ECO:0007669"/>
    <property type="project" value="Ensembl"/>
</dbReference>
<dbReference type="GO" id="GO:0000836">
    <property type="term" value="C:Hrd1p ubiquitin ligase complex"/>
    <property type="evidence" value="ECO:0000314"/>
    <property type="project" value="UniProtKB"/>
</dbReference>
<dbReference type="GO" id="GO:1990037">
    <property type="term" value="C:Lewy body core"/>
    <property type="evidence" value="ECO:0000314"/>
    <property type="project" value="ParkinsonsUK-UCL"/>
</dbReference>
<dbReference type="GO" id="GO:0016020">
    <property type="term" value="C:membrane"/>
    <property type="evidence" value="ECO:0007005"/>
    <property type="project" value="UniProtKB"/>
</dbReference>
<dbReference type="GO" id="GO:0044325">
    <property type="term" value="F:transmembrane transporter binding"/>
    <property type="evidence" value="ECO:0000353"/>
    <property type="project" value="ParkinsonsUK-UCL"/>
</dbReference>
<dbReference type="GO" id="GO:1990756">
    <property type="term" value="F:ubiquitin-like ligase-substrate adaptor activity"/>
    <property type="evidence" value="ECO:0007669"/>
    <property type="project" value="Ensembl"/>
</dbReference>
<dbReference type="GO" id="GO:0032469">
    <property type="term" value="P:endoplasmic reticulum calcium ion homeostasis"/>
    <property type="evidence" value="ECO:0000314"/>
    <property type="project" value="ParkinsonsUK-UCL"/>
</dbReference>
<dbReference type="GO" id="GO:0030968">
    <property type="term" value="P:endoplasmic reticulum unfolded protein response"/>
    <property type="evidence" value="ECO:0000318"/>
    <property type="project" value="GO_Central"/>
</dbReference>
<dbReference type="GO" id="GO:0036503">
    <property type="term" value="P:ERAD pathway"/>
    <property type="evidence" value="ECO:0000315"/>
    <property type="project" value="UniProtKB"/>
</dbReference>
<dbReference type="GO" id="GO:1902236">
    <property type="term" value="P:negative regulation of endoplasmic reticulum stress-induced intrinsic apoptotic signaling pathway"/>
    <property type="evidence" value="ECO:0000314"/>
    <property type="project" value="ParkinsonsUK-UCL"/>
</dbReference>
<dbReference type="GO" id="GO:2001243">
    <property type="term" value="P:negative regulation of intrinsic apoptotic signaling pathway"/>
    <property type="evidence" value="ECO:0000316"/>
    <property type="project" value="ParkinsonsUK-UCL"/>
</dbReference>
<dbReference type="GO" id="GO:1904294">
    <property type="term" value="P:positive regulation of ERAD pathway"/>
    <property type="evidence" value="ECO:0000314"/>
    <property type="project" value="ParkinsonsUK-UCL"/>
</dbReference>
<dbReference type="GO" id="GO:2000060">
    <property type="term" value="P:positive regulation of ubiquitin-dependent protein catabolic process"/>
    <property type="evidence" value="ECO:0000314"/>
    <property type="project" value="ParkinsonsUK-UCL"/>
</dbReference>
<dbReference type="GO" id="GO:0045047">
    <property type="term" value="P:protein targeting to ER"/>
    <property type="evidence" value="ECO:0007669"/>
    <property type="project" value="Ensembl"/>
</dbReference>
<dbReference type="GO" id="GO:1904292">
    <property type="term" value="P:regulation of ERAD pathway"/>
    <property type="evidence" value="ECO:0000318"/>
    <property type="project" value="GO_Central"/>
</dbReference>
<dbReference type="GO" id="GO:0031396">
    <property type="term" value="P:regulation of protein ubiquitination"/>
    <property type="evidence" value="ECO:0007669"/>
    <property type="project" value="Ensembl"/>
</dbReference>
<dbReference type="GO" id="GO:0034976">
    <property type="term" value="P:response to endoplasmic reticulum stress"/>
    <property type="evidence" value="ECO:0000304"/>
    <property type="project" value="ParkinsonsUK-UCL"/>
</dbReference>
<dbReference type="GO" id="GO:0006986">
    <property type="term" value="P:response to unfolded protein"/>
    <property type="evidence" value="ECO:0000270"/>
    <property type="project" value="UniProtKB"/>
</dbReference>
<dbReference type="GO" id="GO:0030970">
    <property type="term" value="P:retrograde protein transport, ER to cytosol"/>
    <property type="evidence" value="ECO:0000315"/>
    <property type="project" value="ParkinsonsUK-UCL"/>
</dbReference>
<dbReference type="GO" id="GO:0006511">
    <property type="term" value="P:ubiquitin-dependent protein catabolic process"/>
    <property type="evidence" value="ECO:0000318"/>
    <property type="project" value="GO_Central"/>
</dbReference>
<dbReference type="CDD" id="cd17118">
    <property type="entry name" value="Ubl_HERP1"/>
    <property type="match status" value="1"/>
</dbReference>
<dbReference type="FunFam" id="3.10.20.90:FF:000046">
    <property type="entry name" value="Homocysteine-responsive endoplasmic reticulum-resident ubiquitin-like domain member 2 protein"/>
    <property type="match status" value="1"/>
</dbReference>
<dbReference type="Gene3D" id="3.10.20.90">
    <property type="entry name" value="Phosphatidylinositol 3-kinase Catalytic Subunit, Chain A, domain 1"/>
    <property type="match status" value="1"/>
</dbReference>
<dbReference type="InterPro" id="IPR039751">
    <property type="entry name" value="HERPUD1/2"/>
</dbReference>
<dbReference type="InterPro" id="IPR000626">
    <property type="entry name" value="Ubiquitin-like_dom"/>
</dbReference>
<dbReference type="InterPro" id="IPR029071">
    <property type="entry name" value="Ubiquitin-like_domsf"/>
</dbReference>
<dbReference type="PANTHER" id="PTHR12943:SF7">
    <property type="entry name" value="HOMOCYSTEINE-RESPONSIVE ENDOPLASMIC RETICULUM-RESIDENT UBIQUITIN-LIKE DOMAIN MEMBER 1 PROTEIN"/>
    <property type="match status" value="1"/>
</dbReference>
<dbReference type="PANTHER" id="PTHR12943">
    <property type="entry name" value="HOMOCYSTEINE-RESPONSIVE ENDOPLASMIC RETICULUM-RESIDENT UNIQUITIN-LIKE DOMAIN HERPUD PROTEIN FAMILY MEMBER"/>
    <property type="match status" value="1"/>
</dbReference>
<dbReference type="Pfam" id="PF00240">
    <property type="entry name" value="ubiquitin"/>
    <property type="match status" value="1"/>
</dbReference>
<dbReference type="SMART" id="SM00213">
    <property type="entry name" value="UBQ"/>
    <property type="match status" value="1"/>
</dbReference>
<dbReference type="SUPFAM" id="SSF54236">
    <property type="entry name" value="Ubiquitin-like"/>
    <property type="match status" value="1"/>
</dbReference>
<dbReference type="PROSITE" id="PS50053">
    <property type="entry name" value="UBIQUITIN_2"/>
    <property type="match status" value="1"/>
</dbReference>
<organism>
    <name type="scientific">Homo sapiens</name>
    <name type="common">Human</name>
    <dbReference type="NCBI Taxonomy" id="9606"/>
    <lineage>
        <taxon>Eukaryota</taxon>
        <taxon>Metazoa</taxon>
        <taxon>Chordata</taxon>
        <taxon>Craniata</taxon>
        <taxon>Vertebrata</taxon>
        <taxon>Euteleostomi</taxon>
        <taxon>Mammalia</taxon>
        <taxon>Eutheria</taxon>
        <taxon>Euarchontoglires</taxon>
        <taxon>Primates</taxon>
        <taxon>Haplorrhini</taxon>
        <taxon>Catarrhini</taxon>
        <taxon>Hominidae</taxon>
        <taxon>Homo</taxon>
    </lineage>
</organism>
<evidence type="ECO:0000255" key="1"/>
<evidence type="ECO:0000255" key="2">
    <source>
        <dbReference type="PROSITE-ProRule" id="PRU00214"/>
    </source>
</evidence>
<evidence type="ECO:0000256" key="3">
    <source>
        <dbReference type="SAM" id="MobiDB-lite"/>
    </source>
</evidence>
<evidence type="ECO:0000269" key="4">
    <source>
    </source>
</evidence>
<evidence type="ECO:0000269" key="5">
    <source>
    </source>
</evidence>
<evidence type="ECO:0000269" key="6">
    <source>
    </source>
</evidence>
<evidence type="ECO:0000269" key="7">
    <source>
    </source>
</evidence>
<evidence type="ECO:0000269" key="8">
    <source>
    </source>
</evidence>
<evidence type="ECO:0000269" key="9">
    <source>
    </source>
</evidence>
<evidence type="ECO:0000269" key="10">
    <source>
    </source>
</evidence>
<evidence type="ECO:0000303" key="11">
    <source>
    </source>
</evidence>
<evidence type="ECO:0000303" key="12">
    <source ref="3"/>
</evidence>
<evidence type="ECO:0000305" key="13"/>
<evidence type="ECO:0007744" key="14">
    <source>
    </source>
</evidence>
<evidence type="ECO:0007744" key="15">
    <source>
    </source>
</evidence>
<evidence type="ECO:0007829" key="16">
    <source>
        <dbReference type="PDB" id="1WGD"/>
    </source>
</evidence>
<protein>
    <recommendedName>
        <fullName>Homocysteine-responsive endoplasmic reticulum-resident ubiquitin-like domain member 1 protein</fullName>
    </recommendedName>
    <alternativeName>
        <fullName>Methyl methanesulfonate (MMF)-inducible fragment protein 1</fullName>
    </alternativeName>
</protein>
<gene>
    <name type="primary">HERPUD1</name>
    <name type="synonym">HERP</name>
    <name type="synonym">KIAA0025</name>
    <name type="synonym">MIF1</name>
</gene>
<reference key="1">
    <citation type="journal article" date="2000" name="J. Biol. Chem.">
        <title>Herp, a new ubiquitin-like membrane protein induced by endoplasmic reticulum stress.</title>
        <authorList>
            <person name="Kokame K."/>
            <person name="Agarwala K.L."/>
            <person name="Kato H."/>
            <person name="Miyata T."/>
        </authorList>
    </citation>
    <scope>NUCLEOTIDE SEQUENCE [MRNA] (ISOFORM 1)</scope>
    <scope>INDUCTION</scope>
    <scope>SUBCELLULAR LOCATION</scope>
    <scope>MEMBRANE TOPOLOGY</scope>
    <source>
        <tissue>Umbilical vein endothelial cell</tissue>
    </source>
</reference>
<reference key="2">
    <citation type="journal article" date="1994" name="DNA Res.">
        <title>Prediction of the coding sequences of unidentified human genes. I. The coding sequences of 40 new genes (KIAA0001-KIAA0040) deduced by analysis of randomly sampled cDNA clones from human immature myeloid cell line KG-1.</title>
        <authorList>
            <person name="Nomura N."/>
            <person name="Miyajima N."/>
            <person name="Sazuka T."/>
            <person name="Tanaka A."/>
            <person name="Kawarabayasi Y."/>
            <person name="Sato S."/>
            <person name="Nagase T."/>
            <person name="Seki N."/>
            <person name="Ishikawa K."/>
            <person name="Tabata S."/>
        </authorList>
    </citation>
    <scope>NUCLEOTIDE SEQUENCE [LARGE SCALE MRNA] (ISOFORM 1)</scope>
    <source>
        <tissue>Bone marrow</tissue>
    </source>
</reference>
<reference key="3">
    <citation type="submission" date="1998-03" db="EMBL/GenBank/DDBJ databases">
        <authorList>
            <person name="Yu W."/>
            <person name="Gibbs R.A."/>
        </authorList>
    </citation>
    <scope>NUCLEOTIDE SEQUENCE [LARGE SCALE MRNA] (ISOFORMS 1 AND 2)</scope>
    <source>
        <tissue>Brain</tissue>
    </source>
</reference>
<reference key="4">
    <citation type="journal article" date="2001" name="J. Biol. Chem.">
        <title>Identification of ERSE-II, a new cis-acting element responsible for the ATF6-dependent mammalian unfolded protein response.</title>
        <authorList>
            <person name="Kokame K."/>
            <person name="Kato H."/>
            <person name="Miyata T."/>
        </authorList>
    </citation>
    <scope>NUCLEOTIDE SEQUENCE [GENOMIC DNA]</scope>
</reference>
<reference key="5">
    <citation type="submission" date="2004-06" db="EMBL/GenBank/DDBJ databases">
        <title>Cloning of human full open reading frames in Gateway(TM) system entry vector (pDONR201).</title>
        <authorList>
            <person name="Ebert L."/>
            <person name="Schick M."/>
            <person name="Neubert P."/>
            <person name="Schatten R."/>
            <person name="Henze S."/>
            <person name="Korn B."/>
        </authorList>
    </citation>
    <scope>NUCLEOTIDE SEQUENCE [LARGE SCALE MRNA] (ISOFORM 1)</scope>
</reference>
<reference key="6">
    <citation type="journal article" date="2004" name="Nature">
        <title>The sequence and analysis of duplication-rich human chromosome 16.</title>
        <authorList>
            <person name="Martin J."/>
            <person name="Han C."/>
            <person name="Gordon L.A."/>
            <person name="Terry A."/>
            <person name="Prabhakar S."/>
            <person name="She X."/>
            <person name="Xie G."/>
            <person name="Hellsten U."/>
            <person name="Chan Y.M."/>
            <person name="Altherr M."/>
            <person name="Couronne O."/>
            <person name="Aerts A."/>
            <person name="Bajorek E."/>
            <person name="Black S."/>
            <person name="Blumer H."/>
            <person name="Branscomb E."/>
            <person name="Brown N.C."/>
            <person name="Bruno W.J."/>
            <person name="Buckingham J.M."/>
            <person name="Callen D.F."/>
            <person name="Campbell C.S."/>
            <person name="Campbell M.L."/>
            <person name="Campbell E.W."/>
            <person name="Caoile C."/>
            <person name="Challacombe J.F."/>
            <person name="Chasteen L.A."/>
            <person name="Chertkov O."/>
            <person name="Chi H.C."/>
            <person name="Christensen M."/>
            <person name="Clark L.M."/>
            <person name="Cohn J.D."/>
            <person name="Denys M."/>
            <person name="Detter J.C."/>
            <person name="Dickson M."/>
            <person name="Dimitrijevic-Bussod M."/>
            <person name="Escobar J."/>
            <person name="Fawcett J.J."/>
            <person name="Flowers D."/>
            <person name="Fotopulos D."/>
            <person name="Glavina T."/>
            <person name="Gomez M."/>
            <person name="Gonzales E."/>
            <person name="Goodstein D."/>
            <person name="Goodwin L.A."/>
            <person name="Grady D.L."/>
            <person name="Grigoriev I."/>
            <person name="Groza M."/>
            <person name="Hammon N."/>
            <person name="Hawkins T."/>
            <person name="Haydu L."/>
            <person name="Hildebrand C.E."/>
            <person name="Huang W."/>
            <person name="Israni S."/>
            <person name="Jett J."/>
            <person name="Jewett P.B."/>
            <person name="Kadner K."/>
            <person name="Kimball H."/>
            <person name="Kobayashi A."/>
            <person name="Krawczyk M.-C."/>
            <person name="Leyba T."/>
            <person name="Longmire J.L."/>
            <person name="Lopez F."/>
            <person name="Lou Y."/>
            <person name="Lowry S."/>
            <person name="Ludeman T."/>
            <person name="Manohar C.F."/>
            <person name="Mark G.A."/>
            <person name="McMurray K.L."/>
            <person name="Meincke L.J."/>
            <person name="Morgan J."/>
            <person name="Moyzis R.K."/>
            <person name="Mundt M.O."/>
            <person name="Munk A.C."/>
            <person name="Nandkeshwar R.D."/>
            <person name="Pitluck S."/>
            <person name="Pollard M."/>
            <person name="Predki P."/>
            <person name="Parson-Quintana B."/>
            <person name="Ramirez L."/>
            <person name="Rash S."/>
            <person name="Retterer J."/>
            <person name="Ricke D.O."/>
            <person name="Robinson D.L."/>
            <person name="Rodriguez A."/>
            <person name="Salamov A."/>
            <person name="Saunders E.H."/>
            <person name="Scott D."/>
            <person name="Shough T."/>
            <person name="Stallings R.L."/>
            <person name="Stalvey M."/>
            <person name="Sutherland R.D."/>
            <person name="Tapia R."/>
            <person name="Tesmer J.G."/>
            <person name="Thayer N."/>
            <person name="Thompson L.S."/>
            <person name="Tice H."/>
            <person name="Torney D.C."/>
            <person name="Tran-Gyamfi M."/>
            <person name="Tsai M."/>
            <person name="Ulanovsky L.E."/>
            <person name="Ustaszewska A."/>
            <person name="Vo N."/>
            <person name="White P.S."/>
            <person name="Williams A.L."/>
            <person name="Wills P.L."/>
            <person name="Wu J.-R."/>
            <person name="Wu K."/>
            <person name="Yang J."/>
            <person name="DeJong P."/>
            <person name="Bruce D."/>
            <person name="Doggett N.A."/>
            <person name="Deaven L."/>
            <person name="Schmutz J."/>
            <person name="Grimwood J."/>
            <person name="Richardson P."/>
            <person name="Rokhsar D.S."/>
            <person name="Eichler E.E."/>
            <person name="Gilna P."/>
            <person name="Lucas S.M."/>
            <person name="Myers R.M."/>
            <person name="Rubin E.M."/>
            <person name="Pennacchio L.A."/>
        </authorList>
    </citation>
    <scope>NUCLEOTIDE SEQUENCE [LARGE SCALE GENOMIC DNA]</scope>
</reference>
<reference key="7">
    <citation type="journal article" date="2004" name="Genome Res.">
        <title>The status, quality, and expansion of the NIH full-length cDNA project: the Mammalian Gene Collection (MGC).</title>
        <authorList>
            <consortium name="The MGC Project Team"/>
        </authorList>
    </citation>
    <scope>NUCLEOTIDE SEQUENCE [LARGE SCALE MRNA] (ISOFORMS 1 AND 3)</scope>
    <source>
        <tissue>Brain</tissue>
        <tissue>Eye</tissue>
        <tissue>Placenta</tissue>
        <tissue>Testis</tissue>
    </source>
</reference>
<reference key="8">
    <citation type="journal article" date="2002" name="J. Biol. Chem.">
        <title>Endoplasmic reticulum stress-inducible protein, Herp, enhances presenilin-mediated generation of amyloid beta-protein.</title>
        <authorList>
            <person name="Sai X."/>
            <person name="Kawamura Y."/>
            <person name="Kokame K."/>
            <person name="Yamaguchi H."/>
            <person name="Shiraishi H."/>
            <person name="Suzuki R."/>
            <person name="Suzuki T."/>
            <person name="Kawaichi M."/>
            <person name="Miyata T."/>
            <person name="Kitamura T."/>
            <person name="De Strooper B."/>
            <person name="Yanagisawa K."/>
            <person name="Komano H."/>
        </authorList>
    </citation>
    <scope>INTERACTION WITH PSEN1 AND PSEN2</scope>
</reference>
<reference key="9">
    <citation type="journal article" date="2000" name="FEBS Lett.">
        <title>The novel MMS-inducible gene Mif1/KIAA0025 is a target of the unfolded protein response pathway.</title>
        <authorList>
            <person name="van Laar T."/>
            <person name="Schouten T."/>
            <person name="Hoogervorst E."/>
            <person name="van Eck M."/>
            <person name="van der Eb A.J."/>
            <person name="Terleth C."/>
        </authorList>
    </citation>
    <scope>CHARACTERIZATION</scope>
    <source>
        <tissue>Skin fibroblast</tissue>
    </source>
</reference>
<reference key="10">
    <citation type="journal article" date="2005" name="J. Mol. Biol.">
        <title>The ubiquitin-domain protein HERP forms a complex with components of the endoplasmic reticulum associated degradation pathway.</title>
        <authorList>
            <person name="Schulze A."/>
            <person name="Standera S."/>
            <person name="Buerger E."/>
            <person name="Kikkert M."/>
            <person name="van Voorden S."/>
            <person name="Wiertz E."/>
            <person name="Koning F."/>
            <person name="Kloetzel P.-M."/>
            <person name="Seeger M."/>
        </authorList>
    </citation>
    <scope>FUNCTION</scope>
    <scope>INTERACTION WITH SYVN1</scope>
</reference>
<reference key="11">
    <citation type="journal article" date="2006" name="Mol. Cell. Biol.">
        <title>Luman/CREB3 induces transcription of the endoplasmic reticulum (ER) stress response protein Herp through an ER stress response element.</title>
        <authorList>
            <person name="Liang G."/>
            <person name="Audas T.E."/>
            <person name="Li Y."/>
            <person name="Cockram G.P."/>
            <person name="Dean J.D."/>
            <person name="Martyn A.C."/>
            <person name="Kokame K."/>
            <person name="Lu R."/>
        </authorList>
    </citation>
    <scope>INDUCTION</scope>
</reference>
<reference key="12">
    <citation type="journal article" date="2008" name="Biochem. Biophys. Res. Commun.">
        <title>Herp enhances ER-associated protein degradation by recruiting ubiquilins.</title>
        <authorList>
            <person name="Kim T.Y."/>
            <person name="Kim E."/>
            <person name="Yoon S.K."/>
            <person name="Yoon J.B."/>
        </authorList>
    </citation>
    <scope>FUNCTION</scope>
    <scope>INTERACTION WITH UBQLN1; UBQLN2 AND UBQLN4</scope>
</reference>
<reference key="13">
    <citation type="journal article" date="2008" name="Int. J. Biochem. Cell Biol.">
        <title>Ubxd1 is a novel co-factor of the human p97 ATPase.</title>
        <authorList>
            <person name="Madsen L."/>
            <person name="Andersen K.M."/>
            <person name="Prag S."/>
            <person name="Moos T."/>
            <person name="Semple C.A."/>
            <person name="Seeger M."/>
            <person name="Hartmann-Petersen R."/>
        </authorList>
    </citation>
    <scope>INTERACTION WITH UBXN6</scope>
</reference>
<reference key="14">
    <citation type="journal article" date="2011" name="BMC Syst. Biol.">
        <title>Initial characterization of the human central proteome.</title>
        <authorList>
            <person name="Burkard T.R."/>
            <person name="Planyavsky M."/>
            <person name="Kaupe I."/>
            <person name="Breitwieser F.P."/>
            <person name="Buerckstuemmer T."/>
            <person name="Bennett K.L."/>
            <person name="Superti-Furga G."/>
            <person name="Colinge J."/>
        </authorList>
    </citation>
    <scope>IDENTIFICATION BY MASS SPECTROMETRY [LARGE SCALE ANALYSIS]</scope>
</reference>
<reference key="15">
    <citation type="journal article" date="2012" name="Proc. Natl. Acad. Sci. U.S.A.">
        <title>N-terminal acetylome analyses and functional insights of the N-terminal acetyltransferase NatB.</title>
        <authorList>
            <person name="Van Damme P."/>
            <person name="Lasa M."/>
            <person name="Polevoda B."/>
            <person name="Gazquez C."/>
            <person name="Elosegui-Artola A."/>
            <person name="Kim D.S."/>
            <person name="De Juan-Pardo E."/>
            <person name="Demeyer K."/>
            <person name="Hole K."/>
            <person name="Larrea E."/>
            <person name="Timmerman E."/>
            <person name="Prieto J."/>
            <person name="Arnesen T."/>
            <person name="Sherman F."/>
            <person name="Gevaert K."/>
            <person name="Aldabe R."/>
        </authorList>
    </citation>
    <scope>ACETYLATION [LARGE SCALE ANALYSIS] AT MET-1</scope>
    <scope>IDENTIFICATION BY MASS SPECTROMETRY [LARGE SCALE ANALYSIS]</scope>
</reference>
<reference key="16">
    <citation type="journal article" date="2014" name="J. Proteomics">
        <title>An enzyme assisted RP-RPLC approach for in-depth analysis of human liver phosphoproteome.</title>
        <authorList>
            <person name="Bian Y."/>
            <person name="Song C."/>
            <person name="Cheng K."/>
            <person name="Dong M."/>
            <person name="Wang F."/>
            <person name="Huang J."/>
            <person name="Sun D."/>
            <person name="Wang L."/>
            <person name="Ye M."/>
            <person name="Zou H."/>
        </authorList>
    </citation>
    <scope>PHOSPHORYLATION [LARGE SCALE ANALYSIS] AT SER-135</scope>
    <scope>IDENTIFICATION BY MASS SPECTROMETRY [LARGE SCALE ANALYSIS]</scope>
    <source>
        <tissue>Liver</tissue>
    </source>
</reference>
<reference key="17">
    <citation type="journal article" date="2017" name="J. Cell Sci.">
        <title>Conserved cytoplasmic domains promote Hrd1 ubiquitin ligase complex formation for ER-associated degradation (ERAD).</title>
        <authorList>
            <person name="Schulz J."/>
            <person name="Avci D."/>
            <person name="Queisser M.A."/>
            <person name="Gutschmidt A."/>
            <person name="Dreher L.S."/>
            <person name="Fenech E.J."/>
            <person name="Volkmar N."/>
            <person name="Hayashi Y."/>
            <person name="Hoppe T."/>
            <person name="Christianson J.C."/>
        </authorList>
    </citation>
    <scope>FUNCTION</scope>
    <scope>IDENTIFICATION IN THE HRD1 COMPLEX</scope>
</reference>
<reference key="18">
    <citation type="submission" date="2004-11" db="PDB data bank">
        <title>Solution structure of the UBL-domain of HERP.</title>
        <authorList>
            <consortium name="RIKEN structural genomics initiative (RSGI)"/>
        </authorList>
    </citation>
    <scope>STRUCTURE BY NMR OF 10-90</scope>
</reference>
<comment type="function">
    <text evidence="6 8 10">Component of the endoplasmic reticulum quality control (ERQC) system also called ER-associated degradation (ERAD) involved in ubiquitin-dependent degradation of misfolded endoplasmic reticulum proteins (PubMed:16289116, PubMed:28827405). Could enhance presenilin-mediated amyloid-beta protein 40 generation. Binds to ubiquilins and this interaction is required for efficient degradation of CD3D via the ERAD pathway (PubMed:18307982).</text>
</comment>
<comment type="subunit">
    <text evidence="5 6 8 9 10">Interacts with PSEN1 and PSEN2 (PubMed:11799129). Interacts with UBXN6 (PubMed:18656546). Interacts with UBQLN1, UBQLN2 and UBQLN4 (PubMed:18307982). Component of the HRD1 complex, which comprises at least SYNV1/HRD1, FAM8A1, HERPUD1/HERP, OS9, SEL1L and UBE2J1. FAM8A1 binding to SYNV1 may promote recruitment of HERPUD1 to the HRD1 complex (PubMed:16289116, PubMed:28827405).</text>
</comment>
<comment type="subcellular location">
    <subcellularLocation>
        <location evidence="4">Endoplasmic reticulum membrane</location>
        <topology evidence="4">Multi-pass membrane protein</topology>
    </subcellularLocation>
</comment>
<comment type="alternative products">
    <event type="alternative splicing"/>
    <isoform>
        <id>Q15011-1</id>
        <name>1</name>
        <sequence type="displayed"/>
    </isoform>
    <isoform>
        <id>Q15011-2</id>
        <name>2</name>
        <sequence type="described" ref="VSP_006708"/>
    </isoform>
    <isoform>
        <id>Q15011-3</id>
        <name>3</name>
        <sequence type="described" ref="VSP_006708 VSP_006709"/>
    </isoform>
    <isoform>
        <id>Q15011-4</id>
        <name>4</name>
        <sequence type="described" ref="VSP_047333"/>
    </isoform>
    <text>Experimental confirmation may be lacking for some isoforms.</text>
</comment>
<comment type="tissue specificity">
    <text>Widely expressed; in the brain, expression seems to be restricted to neurons and vascular smooth muscle cells. Present in activated microglia in senile plaques in the brain of patients with Alzheimer disease.</text>
</comment>
<comment type="induction">
    <text evidence="4 7">Up-regulated by endoplasmic reticulum stress and CREB3.</text>
</comment>
<comment type="miscellaneous">
    <text>Although the precise topology is not known, experimental data suggest that both the N- and C-termini face the cytosol.</text>
</comment>